<protein>
    <recommendedName>
        <fullName evidence="1">Putative membrane protein insertion efficiency factor</fullName>
    </recommendedName>
</protein>
<comment type="function">
    <text evidence="1">Could be involved in insertion of integral membrane proteins into the membrane.</text>
</comment>
<comment type="subcellular location">
    <subcellularLocation>
        <location evidence="1">Cell membrane</location>
        <topology evidence="1">Peripheral membrane protein</topology>
        <orientation evidence="1">Cytoplasmic side</orientation>
    </subcellularLocation>
</comment>
<comment type="similarity">
    <text evidence="1">Belongs to the UPF0161 family.</text>
</comment>
<keyword id="KW-1003">Cell membrane</keyword>
<keyword id="KW-0472">Membrane</keyword>
<keyword id="KW-1185">Reference proteome</keyword>
<sequence length="70" mass="7796">MAGRLVILVLRAYQRFVSPLFPPSCRFTPSCSQYAVEAVERYGPLKGGAMAAWRVLRCHPFSRGGVDPVR</sequence>
<accession>Q1AR60</accession>
<feature type="chain" id="PRO_0000253162" description="Putative membrane protein insertion efficiency factor">
    <location>
        <begin position="1"/>
        <end position="70"/>
    </location>
</feature>
<reference key="1">
    <citation type="submission" date="2006-06" db="EMBL/GenBank/DDBJ databases">
        <title>Complete sequence of Rubrobacter xylanophilus DSM 9941.</title>
        <authorList>
            <consortium name="US DOE Joint Genome Institute"/>
            <person name="Copeland A."/>
            <person name="Lucas S."/>
            <person name="Lapidus A."/>
            <person name="Barry K."/>
            <person name="Detter J.C."/>
            <person name="Glavina del Rio T."/>
            <person name="Hammon N."/>
            <person name="Israni S."/>
            <person name="Dalin E."/>
            <person name="Tice H."/>
            <person name="Pitluck S."/>
            <person name="Munk A.C."/>
            <person name="Brettin T."/>
            <person name="Bruce D."/>
            <person name="Han C."/>
            <person name="Tapia R."/>
            <person name="Gilna P."/>
            <person name="Schmutz J."/>
            <person name="Larimer F."/>
            <person name="Land M."/>
            <person name="Hauser L."/>
            <person name="Kyrpides N."/>
            <person name="Lykidis A."/>
            <person name="da Costa M.S."/>
            <person name="Rainey F.A."/>
            <person name="Empadinhas N."/>
            <person name="Jolivet E."/>
            <person name="Battista J.R."/>
            <person name="Richardson P."/>
        </authorList>
    </citation>
    <scope>NUCLEOTIDE SEQUENCE [LARGE SCALE GENOMIC DNA]</scope>
    <source>
        <strain>DSM 9941 / JCM 11954 / NBRC 16129 / PRD-1</strain>
    </source>
</reference>
<organism>
    <name type="scientific">Rubrobacter xylanophilus (strain DSM 9941 / JCM 11954 / NBRC 16129 / PRD-1)</name>
    <dbReference type="NCBI Taxonomy" id="266117"/>
    <lineage>
        <taxon>Bacteria</taxon>
        <taxon>Bacillati</taxon>
        <taxon>Actinomycetota</taxon>
        <taxon>Rubrobacteria</taxon>
        <taxon>Rubrobacterales</taxon>
        <taxon>Rubrobacteraceae</taxon>
        <taxon>Rubrobacter</taxon>
    </lineage>
</organism>
<dbReference type="EMBL" id="CP000386">
    <property type="protein sequence ID" value="ABG06118.1"/>
    <property type="molecule type" value="Genomic_DNA"/>
</dbReference>
<dbReference type="RefSeq" id="WP_011566123.1">
    <property type="nucleotide sequence ID" value="NC_008148.1"/>
</dbReference>
<dbReference type="STRING" id="266117.Rxyl_3214"/>
<dbReference type="KEGG" id="rxy:Rxyl_3214"/>
<dbReference type="eggNOG" id="COG0759">
    <property type="taxonomic scope" value="Bacteria"/>
</dbReference>
<dbReference type="HOGENOM" id="CLU_144811_6_0_11"/>
<dbReference type="OrthoDB" id="9801753at2"/>
<dbReference type="PhylomeDB" id="Q1AR60"/>
<dbReference type="Proteomes" id="UP000006637">
    <property type="component" value="Chromosome"/>
</dbReference>
<dbReference type="GO" id="GO:0005886">
    <property type="term" value="C:plasma membrane"/>
    <property type="evidence" value="ECO:0007669"/>
    <property type="project" value="UniProtKB-SubCell"/>
</dbReference>
<dbReference type="HAMAP" id="MF_00386">
    <property type="entry name" value="UPF0161_YidD"/>
    <property type="match status" value="1"/>
</dbReference>
<dbReference type="InterPro" id="IPR002696">
    <property type="entry name" value="Membr_insert_effic_factor_YidD"/>
</dbReference>
<dbReference type="NCBIfam" id="TIGR00278">
    <property type="entry name" value="membrane protein insertion efficiency factor YidD"/>
    <property type="match status" value="1"/>
</dbReference>
<dbReference type="PANTHER" id="PTHR33383">
    <property type="entry name" value="MEMBRANE PROTEIN INSERTION EFFICIENCY FACTOR-RELATED"/>
    <property type="match status" value="1"/>
</dbReference>
<dbReference type="PANTHER" id="PTHR33383:SF1">
    <property type="entry name" value="MEMBRANE PROTEIN INSERTION EFFICIENCY FACTOR-RELATED"/>
    <property type="match status" value="1"/>
</dbReference>
<dbReference type="Pfam" id="PF01809">
    <property type="entry name" value="YidD"/>
    <property type="match status" value="1"/>
</dbReference>
<dbReference type="SMART" id="SM01234">
    <property type="entry name" value="Haemolytic"/>
    <property type="match status" value="1"/>
</dbReference>
<evidence type="ECO:0000255" key="1">
    <source>
        <dbReference type="HAMAP-Rule" id="MF_00386"/>
    </source>
</evidence>
<gene>
    <name type="ordered locus">Rxyl_3214</name>
</gene>
<name>YIDD_RUBXD</name>
<proteinExistence type="inferred from homology"/>